<accession>Q4PB52</accession>
<accession>A0A0D1E4D7</accession>
<organism>
    <name type="scientific">Mycosarcoma maydis</name>
    <name type="common">Corn smut fungus</name>
    <name type="synonym">Ustilago maydis</name>
    <dbReference type="NCBI Taxonomy" id="5270"/>
    <lineage>
        <taxon>Eukaryota</taxon>
        <taxon>Fungi</taxon>
        <taxon>Dikarya</taxon>
        <taxon>Basidiomycota</taxon>
        <taxon>Ustilaginomycotina</taxon>
        <taxon>Ustilaginomycetes</taxon>
        <taxon>Ustilaginales</taxon>
        <taxon>Ustilaginaceae</taxon>
        <taxon>Mycosarcoma</taxon>
    </lineage>
</organism>
<keyword id="KW-0963">Cytoplasm</keyword>
<keyword id="KW-0413">Isomerase</keyword>
<keyword id="KW-0479">Metal-binding</keyword>
<keyword id="KW-0496">Mitochondrion</keyword>
<keyword id="KW-0520">NAD</keyword>
<keyword id="KW-0521">NADP</keyword>
<keyword id="KW-0547">Nucleotide-binding</keyword>
<keyword id="KW-0630">Potassium</keyword>
<keyword id="KW-1185">Reference proteome</keyword>
<comment type="function">
    <text evidence="1">Catalyzes the epimerization of the S- and R-forms of NAD(P)HX, a damaged form of NAD(P)H that is a result of enzymatic or heat-dependent hydration. This is a prerequisite for the S-specific NAD(P)H-hydrate dehydratase to allow the repair of both epimers of NAD(P)HX.</text>
</comment>
<comment type="catalytic activity">
    <reaction>
        <text>(6R)-NADHX = (6S)-NADHX</text>
        <dbReference type="Rhea" id="RHEA:32215"/>
        <dbReference type="ChEBI" id="CHEBI:64074"/>
        <dbReference type="ChEBI" id="CHEBI:64075"/>
        <dbReference type="EC" id="5.1.99.6"/>
    </reaction>
</comment>
<comment type="catalytic activity">
    <reaction>
        <text>(6R)-NADPHX = (6S)-NADPHX</text>
        <dbReference type="Rhea" id="RHEA:32227"/>
        <dbReference type="ChEBI" id="CHEBI:64076"/>
        <dbReference type="ChEBI" id="CHEBI:64077"/>
        <dbReference type="EC" id="5.1.99.6"/>
    </reaction>
</comment>
<comment type="cofactor">
    <cofactor evidence="1">
        <name>K(+)</name>
        <dbReference type="ChEBI" id="CHEBI:29103"/>
    </cofactor>
    <text evidence="1">Binds 1 potassium ion per subunit.</text>
</comment>
<comment type="subcellular location">
    <subcellularLocation>
        <location evidence="1">Cytoplasm</location>
    </subcellularLocation>
    <subcellularLocation>
        <location evidence="1">Mitochondrion</location>
    </subcellularLocation>
</comment>
<comment type="similarity">
    <text evidence="1">Belongs to the NnrE/AIBP family.</text>
</comment>
<gene>
    <name type="ORF">UMAG_10306</name>
</gene>
<evidence type="ECO:0000255" key="1">
    <source>
        <dbReference type="HAMAP-Rule" id="MF_03159"/>
    </source>
</evidence>
<reference key="1">
    <citation type="journal article" date="2006" name="Nature">
        <title>Insights from the genome of the biotrophic fungal plant pathogen Ustilago maydis.</title>
        <authorList>
            <person name="Kaemper J."/>
            <person name="Kahmann R."/>
            <person name="Boelker M."/>
            <person name="Ma L.-J."/>
            <person name="Brefort T."/>
            <person name="Saville B.J."/>
            <person name="Banuett F."/>
            <person name="Kronstad J.W."/>
            <person name="Gold S.E."/>
            <person name="Mueller O."/>
            <person name="Perlin M.H."/>
            <person name="Woesten H.A.B."/>
            <person name="de Vries R."/>
            <person name="Ruiz-Herrera J."/>
            <person name="Reynaga-Pena C.G."/>
            <person name="Snetselaar K."/>
            <person name="McCann M."/>
            <person name="Perez-Martin J."/>
            <person name="Feldbruegge M."/>
            <person name="Basse C.W."/>
            <person name="Steinberg G."/>
            <person name="Ibeas J.I."/>
            <person name="Holloman W."/>
            <person name="Guzman P."/>
            <person name="Farman M.L."/>
            <person name="Stajich J.E."/>
            <person name="Sentandreu R."/>
            <person name="Gonzalez-Prieto J.M."/>
            <person name="Kennell J.C."/>
            <person name="Molina L."/>
            <person name="Schirawski J."/>
            <person name="Mendoza-Mendoza A."/>
            <person name="Greilinger D."/>
            <person name="Muench K."/>
            <person name="Roessel N."/>
            <person name="Scherer M."/>
            <person name="Vranes M."/>
            <person name="Ladendorf O."/>
            <person name="Vincon V."/>
            <person name="Fuchs U."/>
            <person name="Sandrock B."/>
            <person name="Meng S."/>
            <person name="Ho E.C.H."/>
            <person name="Cahill M.J."/>
            <person name="Boyce K.J."/>
            <person name="Klose J."/>
            <person name="Klosterman S.J."/>
            <person name="Deelstra H.J."/>
            <person name="Ortiz-Castellanos L."/>
            <person name="Li W."/>
            <person name="Sanchez-Alonso P."/>
            <person name="Schreier P.H."/>
            <person name="Haeuser-Hahn I."/>
            <person name="Vaupel M."/>
            <person name="Koopmann E."/>
            <person name="Friedrich G."/>
            <person name="Voss H."/>
            <person name="Schlueter T."/>
            <person name="Margolis J."/>
            <person name="Platt D."/>
            <person name="Swimmer C."/>
            <person name="Gnirke A."/>
            <person name="Chen F."/>
            <person name="Vysotskaia V."/>
            <person name="Mannhaupt G."/>
            <person name="Gueldener U."/>
            <person name="Muensterkoetter M."/>
            <person name="Haase D."/>
            <person name="Oesterheld M."/>
            <person name="Mewes H.-W."/>
            <person name="Mauceli E.W."/>
            <person name="DeCaprio D."/>
            <person name="Wade C.M."/>
            <person name="Butler J."/>
            <person name="Young S.K."/>
            <person name="Jaffe D.B."/>
            <person name="Calvo S.E."/>
            <person name="Nusbaum C."/>
            <person name="Galagan J.E."/>
            <person name="Birren B.W."/>
        </authorList>
    </citation>
    <scope>NUCLEOTIDE SEQUENCE [LARGE SCALE GENOMIC DNA]</scope>
    <source>
        <strain>DSM 14603 / FGSC 9021 / UM521</strain>
    </source>
</reference>
<reference key="2">
    <citation type="submission" date="2014-09" db="EMBL/GenBank/DDBJ databases">
        <authorList>
            <person name="Gueldener U."/>
            <person name="Muensterkoetter M."/>
            <person name="Walter M.C."/>
            <person name="Mannhaupt G."/>
            <person name="Kahmann R."/>
        </authorList>
    </citation>
    <scope>GENOME REANNOTATION</scope>
    <source>
        <strain>DSM 14603 / FGSC 9021 / UM521</strain>
    </source>
</reference>
<feature type="chain" id="PRO_0000416340" description="NAD(P)H-hydrate epimerase">
    <location>
        <begin position="1"/>
        <end position="267"/>
    </location>
</feature>
<feature type="domain" description="YjeF N-terminal" evidence="1">
    <location>
        <begin position="27"/>
        <end position="242"/>
    </location>
</feature>
<feature type="binding site" evidence="1">
    <location>
        <begin position="78"/>
        <end position="82"/>
    </location>
    <ligand>
        <name>(6S)-NADPHX</name>
        <dbReference type="ChEBI" id="CHEBI:64076"/>
    </ligand>
</feature>
<feature type="binding site" evidence="1">
    <location>
        <position position="79"/>
    </location>
    <ligand>
        <name>K(+)</name>
        <dbReference type="ChEBI" id="CHEBI:29103"/>
    </ligand>
</feature>
<feature type="binding site" evidence="1">
    <location>
        <position position="142"/>
    </location>
    <ligand>
        <name>K(+)</name>
        <dbReference type="ChEBI" id="CHEBI:29103"/>
    </ligand>
</feature>
<feature type="binding site" evidence="1">
    <location>
        <begin position="146"/>
        <end position="152"/>
    </location>
    <ligand>
        <name>(6S)-NADPHX</name>
        <dbReference type="ChEBI" id="CHEBI:64076"/>
    </ligand>
</feature>
<feature type="binding site" evidence="1">
    <location>
        <position position="185"/>
    </location>
    <ligand>
        <name>(6S)-NADPHX</name>
        <dbReference type="ChEBI" id="CHEBI:64076"/>
    </ligand>
</feature>
<feature type="binding site" evidence="1">
    <location>
        <position position="188"/>
    </location>
    <ligand>
        <name>K(+)</name>
        <dbReference type="ChEBI" id="CHEBI:29103"/>
    </ligand>
</feature>
<dbReference type="EC" id="5.1.99.6"/>
<dbReference type="EMBL" id="CM003145">
    <property type="protein sequence ID" value="KIS69320.1"/>
    <property type="molecule type" value="Genomic_DNA"/>
</dbReference>
<dbReference type="RefSeq" id="XP_011389188.1">
    <property type="nucleotide sequence ID" value="XM_011390886.1"/>
</dbReference>
<dbReference type="SMR" id="Q4PB52"/>
<dbReference type="FunCoup" id="Q4PB52">
    <property type="interactions" value="37"/>
</dbReference>
<dbReference type="STRING" id="237631.Q4PB52"/>
<dbReference type="EnsemblFungi" id="KIS69320">
    <property type="protein sequence ID" value="KIS69320"/>
    <property type="gene ID" value="UMAG_10306"/>
</dbReference>
<dbReference type="GeneID" id="23566353"/>
<dbReference type="KEGG" id="uma:UMAG_10306"/>
<dbReference type="VEuPathDB" id="FungiDB:UMAG_10306"/>
<dbReference type="eggNOG" id="KOG2585">
    <property type="taxonomic scope" value="Eukaryota"/>
</dbReference>
<dbReference type="HOGENOM" id="CLU_024853_3_1_1"/>
<dbReference type="InParanoid" id="Q4PB52"/>
<dbReference type="OrthoDB" id="10064708at2759"/>
<dbReference type="Proteomes" id="UP000000561">
    <property type="component" value="Chromosome 6"/>
</dbReference>
<dbReference type="GO" id="GO:0005739">
    <property type="term" value="C:mitochondrion"/>
    <property type="evidence" value="ECO:0000318"/>
    <property type="project" value="GO_Central"/>
</dbReference>
<dbReference type="GO" id="GO:0046872">
    <property type="term" value="F:metal ion binding"/>
    <property type="evidence" value="ECO:0007669"/>
    <property type="project" value="UniProtKB-KW"/>
</dbReference>
<dbReference type="GO" id="GO:0052856">
    <property type="term" value="F:NAD(P)HX epimerase activity"/>
    <property type="evidence" value="ECO:0000318"/>
    <property type="project" value="GO_Central"/>
</dbReference>
<dbReference type="GO" id="GO:0000166">
    <property type="term" value="F:nucleotide binding"/>
    <property type="evidence" value="ECO:0007669"/>
    <property type="project" value="UniProtKB-KW"/>
</dbReference>
<dbReference type="FunFam" id="3.40.50.10260:FF:000005">
    <property type="entry name" value="NAD(P)H-hydrate epimerase"/>
    <property type="match status" value="1"/>
</dbReference>
<dbReference type="Gene3D" id="3.40.50.10260">
    <property type="entry name" value="YjeF N-terminal domain"/>
    <property type="match status" value="1"/>
</dbReference>
<dbReference type="HAMAP" id="MF_01966">
    <property type="entry name" value="NADHX_epimerase"/>
    <property type="match status" value="1"/>
</dbReference>
<dbReference type="InterPro" id="IPR004443">
    <property type="entry name" value="YjeF_N_dom"/>
</dbReference>
<dbReference type="InterPro" id="IPR036652">
    <property type="entry name" value="YjeF_N_dom_sf"/>
</dbReference>
<dbReference type="InterPro" id="IPR032976">
    <property type="entry name" value="YJEFN_prot_NAXE-like"/>
</dbReference>
<dbReference type="NCBIfam" id="TIGR00197">
    <property type="entry name" value="yjeF_nterm"/>
    <property type="match status" value="1"/>
</dbReference>
<dbReference type="PANTHER" id="PTHR13232">
    <property type="entry name" value="NAD(P)H-HYDRATE EPIMERASE"/>
    <property type="match status" value="1"/>
</dbReference>
<dbReference type="PANTHER" id="PTHR13232:SF10">
    <property type="entry name" value="NAD(P)H-HYDRATE EPIMERASE"/>
    <property type="match status" value="1"/>
</dbReference>
<dbReference type="Pfam" id="PF03853">
    <property type="entry name" value="YjeF_N"/>
    <property type="match status" value="1"/>
</dbReference>
<dbReference type="SUPFAM" id="SSF64153">
    <property type="entry name" value="YjeF N-terminal domain-like"/>
    <property type="match status" value="1"/>
</dbReference>
<dbReference type="PROSITE" id="PS51385">
    <property type="entry name" value="YJEF_N"/>
    <property type="match status" value="1"/>
</dbReference>
<protein>
    <recommendedName>
        <fullName evidence="1">NAD(P)H-hydrate epimerase</fullName>
        <ecNumber>5.1.99.6</ecNumber>
    </recommendedName>
    <alternativeName>
        <fullName evidence="1">NAD(P)HX epimerase</fullName>
    </alternativeName>
</protein>
<name>NNRE_MYCMD</name>
<sequence length="267" mass="29336">MPFSTPAQPSCSAASPLRLRYIDASTAQKIDEDLMSASGGFSLDQLMELAGLSCAQAVFECYPPTKYPNVLVACGPGNQGGDGLVAARHLYHFGYEPVVWYPKQGKTELFSRLKVQLHNLGLPFVSQDDFQDALEEADVVLDSIFGFNFKGDVREPFRAPLEILKYESRIEFEARKKMPPIVSVDIPSSWHVELGNVNKAFTPSVLISLSAPKLGALAFAGRHFLGGRFLPEDLEAKFDLQLPDYPGTEQVIEITGAKPLQTQEADL</sequence>
<proteinExistence type="inferred from homology"/>